<gene>
    <name type="ORF">DDB_G0290301</name>
</gene>
<feature type="chain" id="PRO_0000346919" description="Uncharacterized protein DDB_G0290301">
    <location>
        <begin position="1"/>
        <end position="1238"/>
    </location>
</feature>
<feature type="region of interest" description="Disordered" evidence="1">
    <location>
        <begin position="1"/>
        <end position="38"/>
    </location>
</feature>
<feature type="region of interest" description="Disordered" evidence="1">
    <location>
        <begin position="122"/>
        <end position="156"/>
    </location>
</feature>
<feature type="region of interest" description="Disordered" evidence="1">
    <location>
        <begin position="229"/>
        <end position="439"/>
    </location>
</feature>
<feature type="region of interest" description="Disordered" evidence="1">
    <location>
        <begin position="660"/>
        <end position="1016"/>
    </location>
</feature>
<feature type="region of interest" description="Disordered" evidence="1">
    <location>
        <begin position="1051"/>
        <end position="1083"/>
    </location>
</feature>
<feature type="region of interest" description="Disordered" evidence="1">
    <location>
        <begin position="1098"/>
        <end position="1191"/>
    </location>
</feature>
<feature type="compositionally biased region" description="Low complexity" evidence="1">
    <location>
        <begin position="10"/>
        <end position="26"/>
    </location>
</feature>
<feature type="compositionally biased region" description="Low complexity" evidence="1">
    <location>
        <begin position="129"/>
        <end position="149"/>
    </location>
</feature>
<feature type="compositionally biased region" description="Low complexity" evidence="1">
    <location>
        <begin position="234"/>
        <end position="276"/>
    </location>
</feature>
<feature type="compositionally biased region" description="Polar residues" evidence="1">
    <location>
        <begin position="317"/>
        <end position="343"/>
    </location>
</feature>
<feature type="compositionally biased region" description="Basic and acidic residues" evidence="1">
    <location>
        <begin position="344"/>
        <end position="361"/>
    </location>
</feature>
<feature type="compositionally biased region" description="Acidic residues" evidence="1">
    <location>
        <begin position="362"/>
        <end position="372"/>
    </location>
</feature>
<feature type="compositionally biased region" description="Basic residues" evidence="1">
    <location>
        <begin position="383"/>
        <end position="394"/>
    </location>
</feature>
<feature type="compositionally biased region" description="Basic and acidic residues" evidence="1">
    <location>
        <begin position="395"/>
        <end position="416"/>
    </location>
</feature>
<feature type="compositionally biased region" description="Low complexity" evidence="1">
    <location>
        <begin position="417"/>
        <end position="435"/>
    </location>
</feature>
<feature type="compositionally biased region" description="Low complexity" evidence="1">
    <location>
        <begin position="678"/>
        <end position="691"/>
    </location>
</feature>
<feature type="compositionally biased region" description="Low complexity" evidence="1">
    <location>
        <begin position="712"/>
        <end position="792"/>
    </location>
</feature>
<feature type="compositionally biased region" description="Basic and acidic residues" evidence="1">
    <location>
        <begin position="793"/>
        <end position="805"/>
    </location>
</feature>
<feature type="compositionally biased region" description="Low complexity" evidence="1">
    <location>
        <begin position="806"/>
        <end position="859"/>
    </location>
</feature>
<feature type="compositionally biased region" description="Low complexity" evidence="1">
    <location>
        <begin position="882"/>
        <end position="906"/>
    </location>
</feature>
<feature type="compositionally biased region" description="Acidic residues" evidence="1">
    <location>
        <begin position="916"/>
        <end position="927"/>
    </location>
</feature>
<feature type="compositionally biased region" description="Polar residues" evidence="1">
    <location>
        <begin position="929"/>
        <end position="944"/>
    </location>
</feature>
<feature type="compositionally biased region" description="Basic and acidic residues" evidence="1">
    <location>
        <begin position="966"/>
        <end position="975"/>
    </location>
</feature>
<feature type="compositionally biased region" description="Acidic residues" evidence="1">
    <location>
        <begin position="976"/>
        <end position="990"/>
    </location>
</feature>
<feature type="compositionally biased region" description="Low complexity" evidence="1">
    <location>
        <begin position="1062"/>
        <end position="1083"/>
    </location>
</feature>
<feature type="compositionally biased region" description="Low complexity" evidence="1">
    <location>
        <begin position="1108"/>
        <end position="1121"/>
    </location>
</feature>
<feature type="compositionally biased region" description="Polar residues" evidence="1">
    <location>
        <begin position="1123"/>
        <end position="1133"/>
    </location>
</feature>
<feature type="compositionally biased region" description="Low complexity" evidence="1">
    <location>
        <begin position="1142"/>
        <end position="1181"/>
    </location>
</feature>
<feature type="compositionally biased region" description="Polar residues" evidence="1">
    <location>
        <begin position="1182"/>
        <end position="1191"/>
    </location>
</feature>
<protein>
    <recommendedName>
        <fullName>Uncharacterized protein DDB_G0290301</fullName>
    </recommendedName>
</protein>
<name>Y8826_DICDI</name>
<sequence length="1238" mass="143676">MSSKRRNKNNKNNNKNNNKNNDNNNNIEQQDDIEDISSGDIDTTNLIIDEIEDVYDDYDNEQIKNSLNHSFSNKNNTSLNNSINLSMSLIEVEETELDISSTIRPWELNIFGSLGSSGGGISSTPISQLSPFKTPSPPSSSSSSSQSPLRKPRPSFLDSFRSQFNITNINNKNNNNNNNTTSNFNTSNILNTSNFRNTNIGINNSANNNRNISRNSLPVTFSQITPIKPKNNKQIDSQSQIKPQSQSQSQSQTQSQIQEVQFSQSESQSQTQTQSQNEEKIGFRLPSPLSPIKNIESEQKKASTTSMSYESIEKSQELQNQTQINKSKQDLTNISQKINITTSQHDKDDLGEYRMSEKGGGDDGDDDDDYDNQDEKDNNYNKTNKKQQQQHHHKGKEESQSEYYEKEKEKEKEDIATTRATTTTKSTDNSNNNINKNKEFNENDLQPWLLDALLTQTAPDYPIIQIIKHYDRKEDINMDGIRRKEYQDGSSFLVSDGVNFMIAILPTSVARDLIVSEGTRKIYHEMVGFIIEVQRYVLFPNSKYSGFELFIGNAKFIDKTNEPINFHNLKGVISSSTKLKEVIKRMSHENYWTASSPTEYSNKFFPQNVSNSHHYQITQHETIISQDQLDSLNNLSDWEKHEQPNKLYQFNIYKTNFRHKNKLKQQQQQQEQQEKENQQQQQQKQQQQQQEEQLKEQQEEQQQNQQEEEKQQPSQRQSQQNQQSQQNQQSQQNQQSQQTQQVSQKHQHSQGSQQNQQSQLLQKHQQSQGSQQRQQSQEKQQSQEKQQSQEKQQSQEKHQSQEKHQSQQSQEKQQSQKKQQSQQSQASQQKYQQSQGSQEKQQSQEKQQQQQQQISSQQKGLPKINDDEEYDDTILESFENYSQSQSDLSQQFLSQSQSQSQSQSQRQSKKRKEREENQDSENLDDTVDMNYNQIPSTLDHSTLQGHKFSMYDNTSYYSNQEQEEREIERRRRELAGEDSDEEFEILDEDQVGIGLTHDNDNDNDDEENSYTPTGAATISFLDQNIISGNSGVDESKIPKVFNKNNFDTIKEEEDDEEEKEQQNNNNNINSNSKNNNVNNKLNSQEYDDTFKDTAWIPKKSGKDKFDQSSSSTNFYSSNKKNVPQPTKSVNKPRSTALKKGASQNRQKQSEQQQQQPQQQPQLPQQQQQQQQQQQLRQQQNENTISSLNASRPITKSAPLKYIKRDLTFEEIVKRNKLIRKSREEKMEMWKQHNNIIDD</sequence>
<evidence type="ECO:0000256" key="1">
    <source>
        <dbReference type="SAM" id="MobiDB-lite"/>
    </source>
</evidence>
<accession>Q54G96</accession>
<keyword id="KW-1185">Reference proteome</keyword>
<reference key="1">
    <citation type="journal article" date="2005" name="Nature">
        <title>The genome of the social amoeba Dictyostelium discoideum.</title>
        <authorList>
            <person name="Eichinger L."/>
            <person name="Pachebat J.A."/>
            <person name="Gloeckner G."/>
            <person name="Rajandream M.A."/>
            <person name="Sucgang R."/>
            <person name="Berriman M."/>
            <person name="Song J."/>
            <person name="Olsen R."/>
            <person name="Szafranski K."/>
            <person name="Xu Q."/>
            <person name="Tunggal B."/>
            <person name="Kummerfeld S."/>
            <person name="Madera M."/>
            <person name="Konfortov B.A."/>
            <person name="Rivero F."/>
            <person name="Bankier A.T."/>
            <person name="Lehmann R."/>
            <person name="Hamlin N."/>
            <person name="Davies R."/>
            <person name="Gaudet P."/>
            <person name="Fey P."/>
            <person name="Pilcher K."/>
            <person name="Chen G."/>
            <person name="Saunders D."/>
            <person name="Sodergren E.J."/>
            <person name="Davis P."/>
            <person name="Kerhornou A."/>
            <person name="Nie X."/>
            <person name="Hall N."/>
            <person name="Anjard C."/>
            <person name="Hemphill L."/>
            <person name="Bason N."/>
            <person name="Farbrother P."/>
            <person name="Desany B."/>
            <person name="Just E."/>
            <person name="Morio T."/>
            <person name="Rost R."/>
            <person name="Churcher C.M."/>
            <person name="Cooper J."/>
            <person name="Haydock S."/>
            <person name="van Driessche N."/>
            <person name="Cronin A."/>
            <person name="Goodhead I."/>
            <person name="Muzny D.M."/>
            <person name="Mourier T."/>
            <person name="Pain A."/>
            <person name="Lu M."/>
            <person name="Harper D."/>
            <person name="Lindsay R."/>
            <person name="Hauser H."/>
            <person name="James K.D."/>
            <person name="Quiles M."/>
            <person name="Madan Babu M."/>
            <person name="Saito T."/>
            <person name="Buchrieser C."/>
            <person name="Wardroper A."/>
            <person name="Felder M."/>
            <person name="Thangavelu M."/>
            <person name="Johnson D."/>
            <person name="Knights A."/>
            <person name="Loulseged H."/>
            <person name="Mungall K.L."/>
            <person name="Oliver K."/>
            <person name="Price C."/>
            <person name="Quail M.A."/>
            <person name="Urushihara H."/>
            <person name="Hernandez J."/>
            <person name="Rabbinowitsch E."/>
            <person name="Steffen D."/>
            <person name="Sanders M."/>
            <person name="Ma J."/>
            <person name="Kohara Y."/>
            <person name="Sharp S."/>
            <person name="Simmonds M.N."/>
            <person name="Spiegler S."/>
            <person name="Tivey A."/>
            <person name="Sugano S."/>
            <person name="White B."/>
            <person name="Walker D."/>
            <person name="Woodward J.R."/>
            <person name="Winckler T."/>
            <person name="Tanaka Y."/>
            <person name="Shaulsky G."/>
            <person name="Schleicher M."/>
            <person name="Weinstock G.M."/>
            <person name="Rosenthal A."/>
            <person name="Cox E.C."/>
            <person name="Chisholm R.L."/>
            <person name="Gibbs R.A."/>
            <person name="Loomis W.F."/>
            <person name="Platzer M."/>
            <person name="Kay R.R."/>
            <person name="Williams J.G."/>
            <person name="Dear P.H."/>
            <person name="Noegel A.A."/>
            <person name="Barrell B.G."/>
            <person name="Kuspa A."/>
        </authorList>
    </citation>
    <scope>NUCLEOTIDE SEQUENCE [LARGE SCALE GENOMIC DNA]</scope>
    <source>
        <strain>AX4</strain>
    </source>
</reference>
<proteinExistence type="predicted"/>
<dbReference type="EMBL" id="AAFI02000162">
    <property type="protein sequence ID" value="EAL62277.1"/>
    <property type="molecule type" value="Genomic_DNA"/>
</dbReference>
<dbReference type="RefSeq" id="XP_635787.1">
    <property type="nucleotide sequence ID" value="XM_630695.1"/>
</dbReference>
<dbReference type="FunCoup" id="Q54G96">
    <property type="interactions" value="4"/>
</dbReference>
<dbReference type="STRING" id="44689.Q54G96"/>
<dbReference type="PaxDb" id="44689-DDB0188826"/>
<dbReference type="EnsemblProtists" id="EAL62277">
    <property type="protein sequence ID" value="EAL62277"/>
    <property type="gene ID" value="DDB_G0290301"/>
</dbReference>
<dbReference type="GeneID" id="8627593"/>
<dbReference type="KEGG" id="ddi:DDB_G0290301"/>
<dbReference type="dictyBase" id="DDB_G0290301"/>
<dbReference type="VEuPathDB" id="AmoebaDB:DDB_G0290301"/>
<dbReference type="eggNOG" id="ENOG502SQRX">
    <property type="taxonomic scope" value="Eukaryota"/>
</dbReference>
<dbReference type="HOGENOM" id="CLU_267009_0_0_1"/>
<dbReference type="InParanoid" id="Q54G96"/>
<dbReference type="OMA" id="QHETIIS"/>
<dbReference type="PRO" id="PR:Q54G96"/>
<dbReference type="Proteomes" id="UP000002195">
    <property type="component" value="Chromosome 5"/>
</dbReference>
<dbReference type="GO" id="GO:0033186">
    <property type="term" value="C:CAF-1 complex"/>
    <property type="evidence" value="ECO:0000318"/>
    <property type="project" value="GO_Central"/>
</dbReference>
<dbReference type="GO" id="GO:0005634">
    <property type="term" value="C:nucleus"/>
    <property type="evidence" value="ECO:0000318"/>
    <property type="project" value="GO_Central"/>
</dbReference>
<dbReference type="GO" id="GO:0006334">
    <property type="term" value="P:nucleosome assembly"/>
    <property type="evidence" value="ECO:0000318"/>
    <property type="project" value="GO_Central"/>
</dbReference>
<dbReference type="PANTHER" id="PTHR20916">
    <property type="entry name" value="CYSTEINE AND GLYCINE-RICH PROTEIN 2 BINDING PROTEIN"/>
    <property type="match status" value="1"/>
</dbReference>
<dbReference type="PANTHER" id="PTHR20916:SF26">
    <property type="entry name" value="CYSTEINE-RICH PROTEIN 2-BINDING PROTEIN"/>
    <property type="match status" value="1"/>
</dbReference>
<organism>
    <name type="scientific">Dictyostelium discoideum</name>
    <name type="common">Social amoeba</name>
    <dbReference type="NCBI Taxonomy" id="44689"/>
    <lineage>
        <taxon>Eukaryota</taxon>
        <taxon>Amoebozoa</taxon>
        <taxon>Evosea</taxon>
        <taxon>Eumycetozoa</taxon>
        <taxon>Dictyostelia</taxon>
        <taxon>Dictyosteliales</taxon>
        <taxon>Dictyosteliaceae</taxon>
        <taxon>Dictyostelium</taxon>
    </lineage>
</organism>